<comment type="function">
    <text evidence="1">Enables the recognition and targeting of unfolded and aggregated proteins to the ClpC protease or to other proteins involved in proteolysis.</text>
</comment>
<comment type="subunit">
    <text evidence="1">Homodimer.</text>
</comment>
<comment type="domain">
    <text>The N-terminal domain probably binds unfolded/aggregated proteins; the C-terminal domain interacts with ClpC.</text>
</comment>
<comment type="similarity">
    <text evidence="1">Belongs to the MecA family.</text>
</comment>
<name>MECA_STAAS</name>
<feature type="chain" id="PRO_0000212280" description="Adapter protein MecA">
    <location>
        <begin position="1"/>
        <end position="239"/>
    </location>
</feature>
<feature type="region of interest" description="Disordered" evidence="2">
    <location>
        <begin position="118"/>
        <end position="137"/>
    </location>
</feature>
<feature type="compositionally biased region" description="Basic and acidic residues" evidence="2">
    <location>
        <begin position="118"/>
        <end position="128"/>
    </location>
</feature>
<proteinExistence type="inferred from homology"/>
<accession>Q6GAS8</accession>
<organism>
    <name type="scientific">Staphylococcus aureus (strain MSSA476)</name>
    <dbReference type="NCBI Taxonomy" id="282459"/>
    <lineage>
        <taxon>Bacteria</taxon>
        <taxon>Bacillati</taxon>
        <taxon>Bacillota</taxon>
        <taxon>Bacilli</taxon>
        <taxon>Bacillales</taxon>
        <taxon>Staphylococcaceae</taxon>
        <taxon>Staphylococcus</taxon>
    </lineage>
</organism>
<protein>
    <recommendedName>
        <fullName evidence="1">Adapter protein MecA</fullName>
    </recommendedName>
</protein>
<evidence type="ECO:0000255" key="1">
    <source>
        <dbReference type="HAMAP-Rule" id="MF_01124"/>
    </source>
</evidence>
<evidence type="ECO:0000256" key="2">
    <source>
        <dbReference type="SAM" id="MobiDB-lite"/>
    </source>
</evidence>
<sequence>MRIERVDDTTVKLFITYSDIEARGFSREDLWTNRKRGEEFFWSMMDEINEEEDFVVEGPLWIQVHAFEKGVEVTISKSKNEDMMNMSDDDATDQFDEQVQELLAQTLEGEDQLEELFEQRTKEKEAQGSKRQKSSARKNTRTIIVKFNDLEDVINYAYHSNPITTEFEDLLYMVDGTYYYAVHFDSHVDQEVINDSYSQLLEFAYPTDRTEVYLNDYAKIIMSHNVTAQVRRYFPETTE</sequence>
<reference key="1">
    <citation type="journal article" date="2004" name="Proc. Natl. Acad. Sci. U.S.A.">
        <title>Complete genomes of two clinical Staphylococcus aureus strains: evidence for the rapid evolution of virulence and drug resistance.</title>
        <authorList>
            <person name="Holden M.T.G."/>
            <person name="Feil E.J."/>
            <person name="Lindsay J.A."/>
            <person name="Peacock S.J."/>
            <person name="Day N.P.J."/>
            <person name="Enright M.C."/>
            <person name="Foster T.J."/>
            <person name="Moore C.E."/>
            <person name="Hurst L."/>
            <person name="Atkin R."/>
            <person name="Barron A."/>
            <person name="Bason N."/>
            <person name="Bentley S.D."/>
            <person name="Chillingworth C."/>
            <person name="Chillingworth T."/>
            <person name="Churcher C."/>
            <person name="Clark L."/>
            <person name="Corton C."/>
            <person name="Cronin A."/>
            <person name="Doggett J."/>
            <person name="Dowd L."/>
            <person name="Feltwell T."/>
            <person name="Hance Z."/>
            <person name="Harris B."/>
            <person name="Hauser H."/>
            <person name="Holroyd S."/>
            <person name="Jagels K."/>
            <person name="James K.D."/>
            <person name="Lennard N."/>
            <person name="Line A."/>
            <person name="Mayes R."/>
            <person name="Moule S."/>
            <person name="Mungall K."/>
            <person name="Ormond D."/>
            <person name="Quail M.A."/>
            <person name="Rabbinowitsch E."/>
            <person name="Rutherford K.M."/>
            <person name="Sanders M."/>
            <person name="Sharp S."/>
            <person name="Simmonds M."/>
            <person name="Stevens K."/>
            <person name="Whitehead S."/>
            <person name="Barrell B.G."/>
            <person name="Spratt B.G."/>
            <person name="Parkhill J."/>
        </authorList>
    </citation>
    <scope>NUCLEOTIDE SEQUENCE [LARGE SCALE GENOMIC DNA]</scope>
    <source>
        <strain>MSSA476</strain>
    </source>
</reference>
<dbReference type="EMBL" id="BX571857">
    <property type="protein sequence ID" value="CAG42643.1"/>
    <property type="molecule type" value="Genomic_DNA"/>
</dbReference>
<dbReference type="RefSeq" id="WP_001217728.1">
    <property type="nucleotide sequence ID" value="NC_002953.3"/>
</dbReference>
<dbReference type="SMR" id="Q6GAS8"/>
<dbReference type="GeneID" id="98345315"/>
<dbReference type="KEGG" id="sas:SAS0868"/>
<dbReference type="HOGENOM" id="CLU_071496_2_1_9"/>
<dbReference type="GO" id="GO:0030674">
    <property type="term" value="F:protein-macromolecule adaptor activity"/>
    <property type="evidence" value="ECO:0007669"/>
    <property type="project" value="UniProtKB-UniRule"/>
</dbReference>
<dbReference type="Gene3D" id="3.30.70.1950">
    <property type="match status" value="1"/>
</dbReference>
<dbReference type="HAMAP" id="MF_01124">
    <property type="entry name" value="MecA"/>
    <property type="match status" value="1"/>
</dbReference>
<dbReference type="InterPro" id="IPR038471">
    <property type="entry name" value="MecA_C_sf"/>
</dbReference>
<dbReference type="InterPro" id="IPR008681">
    <property type="entry name" value="Neg-reg_MecA"/>
</dbReference>
<dbReference type="NCBIfam" id="NF002642">
    <property type="entry name" value="PRK02315.1-3"/>
    <property type="match status" value="1"/>
</dbReference>
<dbReference type="NCBIfam" id="NF002644">
    <property type="entry name" value="PRK02315.1-5"/>
    <property type="match status" value="1"/>
</dbReference>
<dbReference type="PANTHER" id="PTHR39161">
    <property type="entry name" value="ADAPTER PROTEIN MECA"/>
    <property type="match status" value="1"/>
</dbReference>
<dbReference type="PANTHER" id="PTHR39161:SF1">
    <property type="entry name" value="ADAPTER PROTEIN MECA 1"/>
    <property type="match status" value="1"/>
</dbReference>
<dbReference type="Pfam" id="PF05389">
    <property type="entry name" value="MecA"/>
    <property type="match status" value="1"/>
</dbReference>
<dbReference type="PIRSF" id="PIRSF029008">
    <property type="entry name" value="MecA"/>
    <property type="match status" value="1"/>
</dbReference>
<gene>
    <name evidence="1" type="primary">mecA</name>
    <name type="ordered locus">SAS0868</name>
</gene>